<comment type="similarity">
    <text evidence="1">Belongs to the UPF0412 family.</text>
</comment>
<sequence length="134" mass="14606">MKSVITISASLAISLMLCCTAQANDHKILGVIAMPRNETNDLALKLPVCRIVKRIQLSADHGDLQLSGASIYFKATRSASQTLNIPSEIKEEQTTDWININSDNDNKRCVSKITFSGHTVNSSDMATLKIIGDD</sequence>
<dbReference type="EMBL" id="CU928162">
    <property type="protein sequence ID" value="CAR06235.1"/>
    <property type="molecule type" value="Genomic_DNA"/>
</dbReference>
<dbReference type="RefSeq" id="WP_000843687.1">
    <property type="nucleotide sequence ID" value="NC_011745.1"/>
</dbReference>
<dbReference type="KEGG" id="ecq:ECED1_0012"/>
<dbReference type="HOGENOM" id="CLU_158661_0_0_6"/>
<dbReference type="Proteomes" id="UP000000748">
    <property type="component" value="Chromosome"/>
</dbReference>
<dbReference type="HAMAP" id="MF_01372">
    <property type="entry name" value="UPF0412"/>
    <property type="match status" value="1"/>
</dbReference>
<dbReference type="InterPro" id="IPR020240">
    <property type="entry name" value="UPF0412_YaaI"/>
</dbReference>
<dbReference type="NCBIfam" id="NF007541">
    <property type="entry name" value="PRK10154.1"/>
    <property type="match status" value="1"/>
</dbReference>
<dbReference type="Pfam" id="PF10807">
    <property type="entry name" value="DUF2541"/>
    <property type="match status" value="1"/>
</dbReference>
<reference key="1">
    <citation type="journal article" date="2009" name="PLoS Genet.">
        <title>Organised genome dynamics in the Escherichia coli species results in highly diverse adaptive paths.</title>
        <authorList>
            <person name="Touchon M."/>
            <person name="Hoede C."/>
            <person name="Tenaillon O."/>
            <person name="Barbe V."/>
            <person name="Baeriswyl S."/>
            <person name="Bidet P."/>
            <person name="Bingen E."/>
            <person name="Bonacorsi S."/>
            <person name="Bouchier C."/>
            <person name="Bouvet O."/>
            <person name="Calteau A."/>
            <person name="Chiapello H."/>
            <person name="Clermont O."/>
            <person name="Cruveiller S."/>
            <person name="Danchin A."/>
            <person name="Diard M."/>
            <person name="Dossat C."/>
            <person name="Karoui M.E."/>
            <person name="Frapy E."/>
            <person name="Garry L."/>
            <person name="Ghigo J.M."/>
            <person name="Gilles A.M."/>
            <person name="Johnson J."/>
            <person name="Le Bouguenec C."/>
            <person name="Lescat M."/>
            <person name="Mangenot S."/>
            <person name="Martinez-Jehanne V."/>
            <person name="Matic I."/>
            <person name="Nassif X."/>
            <person name="Oztas S."/>
            <person name="Petit M.A."/>
            <person name="Pichon C."/>
            <person name="Rouy Z."/>
            <person name="Ruf C.S."/>
            <person name="Schneider D."/>
            <person name="Tourret J."/>
            <person name="Vacherie B."/>
            <person name="Vallenet D."/>
            <person name="Medigue C."/>
            <person name="Rocha E.P.C."/>
            <person name="Denamur E."/>
        </authorList>
    </citation>
    <scope>NUCLEOTIDE SEQUENCE [LARGE SCALE GENOMIC DNA]</scope>
    <source>
        <strain>ED1a</strain>
    </source>
</reference>
<proteinExistence type="inferred from homology"/>
<feature type="signal peptide" evidence="1">
    <location>
        <begin position="1"/>
        <end position="23"/>
    </location>
</feature>
<feature type="chain" id="PRO_1000184172" description="UPF0412 protein YaaI">
    <location>
        <begin position="24"/>
        <end position="134"/>
    </location>
</feature>
<keyword id="KW-0732">Signal</keyword>
<accession>B7MNM0</accession>
<name>YAAI_ECO81</name>
<evidence type="ECO:0000255" key="1">
    <source>
        <dbReference type="HAMAP-Rule" id="MF_01372"/>
    </source>
</evidence>
<gene>
    <name evidence="1" type="primary">yaaI</name>
    <name type="ordered locus">ECED1_0012</name>
</gene>
<protein>
    <recommendedName>
        <fullName evidence="1">UPF0412 protein YaaI</fullName>
    </recommendedName>
</protein>
<organism>
    <name type="scientific">Escherichia coli O81 (strain ED1a)</name>
    <dbReference type="NCBI Taxonomy" id="585397"/>
    <lineage>
        <taxon>Bacteria</taxon>
        <taxon>Pseudomonadati</taxon>
        <taxon>Pseudomonadota</taxon>
        <taxon>Gammaproteobacteria</taxon>
        <taxon>Enterobacterales</taxon>
        <taxon>Enterobacteriaceae</taxon>
        <taxon>Escherichia</taxon>
    </lineage>
</organism>